<sequence length="386" mass="42289">MEVISTNTNGSTIFKNGAIPMNGHQSGTSKHLNGYQNGTSKHQNGHHNGTSEHRNGHQNGISEHQNGHQNGTSEQQNGTISHDNGNELLGNSNSIKLGWFSEFSALWPGEAFSLKVEKLLFQGKSDYQDVMLFESATYGKVLTLDGAIQHTENGGFPYTEMIVHLPLGSIPNPKKVLIIGGGIGFTLFEMLRYPTIEKIDIVEIDDVVVDVSRKSFPYLAANFNDPRVTLVLGDGAAFVKAAQAGYYDAIIVDSSDPIGPAKDLFERPFFEAVAKALRPGGVVCTQAESIWLHMHIIKQIIANCRQVFKGSVNYAWTTVPTYPTGVIGYMLCSTEGPEVDFKNPINPIDKETTQVKSKLAPLKFYNSDIHKAAFILPSFARSMIES</sequence>
<reference key="1">
    <citation type="journal article" date="1999" name="Plant Mol. Biol.">
        <title>Structure and expression of the gene family encoding putrescine N-methyltransferase in Nicotiana tabacum: new clues to the evolutionary origin of cultivated tobacco.</title>
        <authorList>
            <person name="Riechers D.E."/>
            <person name="Timko M.P."/>
        </authorList>
    </citation>
    <scope>NUCLEOTIDE SEQUENCE [GENOMIC DNA]</scope>
    <scope>TISSUE SPECIFICITY</scope>
    <scope>INDUCTION BY YOUNG AERIAL TISSUES REMOVAL</scope>
    <scope>GENE FAMILY</scope>
    <source>
        <strain>cv. Xanthi</strain>
    </source>
</reference>
<reference key="2">
    <citation type="journal article" date="2014" name="Nat. Commun.">
        <title>The tobacco genome sequence and its comparison with those of tomato and potato.</title>
        <authorList>
            <person name="Sierro N."/>
            <person name="Battey J.N."/>
            <person name="Ouadi S."/>
            <person name="Bakaher N."/>
            <person name="Bovet L."/>
            <person name="Willig A."/>
            <person name="Goepfert S."/>
            <person name="Peitsch M.C."/>
            <person name="Ivanov N.V."/>
        </authorList>
    </citation>
    <scope>NUCLEOTIDE SEQUENCE [LARGE SCALE GENOMIC DNA]</scope>
    <source>
        <strain>cv. TN90</strain>
    </source>
</reference>
<reference key="3">
    <citation type="journal article" date="1998" name="Plant Mol. Biol.">
        <title>Differential induction by methyl jasmonate of genes encoding ornithine decarboxylase and other enzymes involved in nicotine biosynthesis in tobacco cell cultures.</title>
        <authorList>
            <person name="Imanishi S."/>
            <person name="Hashizume K."/>
            <person name="Nakakita M."/>
            <person name="Kojima H."/>
            <person name="Matsubayashi Y."/>
            <person name="Hashimoto T."/>
            <person name="Sakagami Y."/>
            <person name="Yamada Y."/>
            <person name="Nakamura K."/>
        </authorList>
    </citation>
    <scope>INDUCTION BY JASMONATE</scope>
    <source>
        <strain>cv. Bright Yellow 2</strain>
    </source>
</reference>
<reference key="4">
    <citation type="journal article" date="2004" name="Plant Mol. Biol.">
        <title>Methyl jasmonate induced expression of the tobacco putrescine N -methyltransferase genes requires both G-box and GCC-motif elements.</title>
        <authorList>
            <person name="Xu B."/>
            <person name="Timko M."/>
        </authorList>
    </citation>
    <scope>INDUCTION BY JASMONATE</scope>
    <source>
        <strain>cv. Bright Yellow 2</strain>
    </source>
</reference>
<reference key="5">
    <citation type="journal article" date="2009" name="Phytochemistry">
        <title>Putrescine N-methyltransferase--the start for alkaloids.</title>
        <authorList>
            <person name="Biastoff S."/>
            <person name="Brandt W."/>
            <person name="Draeger B."/>
        </authorList>
    </citation>
    <scope>REVIEW ON PUTRESCINE N-METHYLTRANSFERASE</scope>
</reference>
<reference key="6">
    <citation type="journal article" date="2013" name="Phytochemistry">
        <title>Molecular genetics of alkaloid biosynthesis in Nicotiana tabacum.</title>
        <authorList>
            <person name="Dewey R.E."/>
            <person name="Xie J."/>
        </authorList>
    </citation>
    <scope>REVIEW ON ALKALOID BIOSYNTHESIS IN NICOTIANA TABACUM</scope>
</reference>
<reference key="7">
    <citation type="journal article" date="2015" name="Mol. Genet. Genomics">
        <title>Current status and prospects for the study of Nicotiana genomics, genetics, and nicotine biosynthesis genes.</title>
        <authorList>
            <person name="Wang X."/>
            <person name="Bennetzen J.L."/>
        </authorList>
    </citation>
    <scope>REVIEW ON NICOTINE BIOSYNTHESIS</scope>
</reference>
<reference key="8">
    <citation type="journal article" date="2019" name="Food Chem. Toxicol.">
        <title>Antiparasitic properties of leaf extracts derived from selected Nicotiana species and Nicotiana tabacum varieties.</title>
        <authorList>
            <person name="Schorderet Weber S."/>
            <person name="Kaminski K.P."/>
            <person name="Perret J.-L."/>
            <person name="Leroy P."/>
            <person name="Mazurov A."/>
            <person name="Peitsch M.C."/>
            <person name="Ivanov N.V."/>
            <person name="Hoeng J."/>
        </authorList>
    </citation>
    <scope>FUNCTION</scope>
    <source>
        <strain>cv. Burley Stella</strain>
        <strain>cv. Burley TN90</strain>
        <strain>cv. Virginia ITB 683</strain>
        <strain>cv. Virginia K326</strain>
    </source>
</reference>
<reference key="9">
    <citation type="journal article" date="2021" name="Plant Direct">
        <title>Impact of nicotine pathway downregulation on polyamine biosynthesis and leaf ripening in tobacco.</title>
        <authorList>
            <person name="Noelke G."/>
            <person name="Chudobova I."/>
            <person name="Houdelet M."/>
            <person name="Volke D."/>
            <person name="Lusso M."/>
            <person name="Frederick J."/>
            <person name="Kudithipudi C."/>
            <person name="Shen Y."/>
            <person name="Warek U."/>
            <person name="Strickland J.A."/>
            <person name="Xu D."/>
            <person name="Schinkel H."/>
            <person name="Schillberg S."/>
        </authorList>
    </citation>
    <scope>FUNCTION</scope>
    <scope>DISRUPTION PHENOTYPE</scope>
    <source>
        <strain>cv. Burley TN90 LC</strain>
    </source>
</reference>
<feature type="chain" id="PRO_0000156544" description="Putrescine N-methyltransferase 4">
    <location>
        <begin position="1"/>
        <end position="386"/>
    </location>
</feature>
<feature type="domain" description="PABS" evidence="1">
    <location>
        <begin position="97"/>
        <end position="334"/>
    </location>
</feature>
<feature type="region of interest" description="Disordered" evidence="3">
    <location>
        <begin position="1"/>
        <end position="87"/>
    </location>
</feature>
<feature type="compositionally biased region" description="Polar residues" evidence="3">
    <location>
        <begin position="1"/>
        <end position="14"/>
    </location>
</feature>
<feature type="compositionally biased region" description="Polar residues" evidence="3">
    <location>
        <begin position="23"/>
        <end position="48"/>
    </location>
</feature>
<feature type="compositionally biased region" description="Polar residues" evidence="3">
    <location>
        <begin position="57"/>
        <end position="87"/>
    </location>
</feature>
<feature type="active site" description="Proton acceptor" evidence="1 2">
    <location>
        <position position="253"/>
    </location>
</feature>
<feature type="binding site" evidence="2">
    <location>
        <position position="128"/>
    </location>
    <ligand>
        <name>S-adenosyl-L-methionine</name>
        <dbReference type="ChEBI" id="CHEBI:59789"/>
    </ligand>
</feature>
<feature type="binding site" evidence="2">
    <location>
        <position position="203"/>
    </location>
    <ligand>
        <name>S-adenosyl-L-methionine</name>
        <dbReference type="ChEBI" id="CHEBI:59789"/>
    </ligand>
</feature>
<feature type="binding site" evidence="2">
    <location>
        <begin position="234"/>
        <end position="235"/>
    </location>
    <ligand>
        <name>S-adenosyl-L-methionine</name>
        <dbReference type="ChEBI" id="CHEBI:59789"/>
    </ligand>
</feature>
<feature type="binding site" evidence="2">
    <location>
        <position position="322"/>
    </location>
    <ligand>
        <name>S-adenosyl-L-methionine</name>
        <dbReference type="ChEBI" id="CHEBI:59789"/>
    </ligand>
</feature>
<feature type="sequence conflict" description="In Ref. 1; AAF14881." ref="1">
    <original>I</original>
    <variation>ISEHQNGHQNGTSEHRNGHQNGISEHQNGHQNGT</variation>
    <location>
        <position position="61"/>
    </location>
</feature>
<protein>
    <recommendedName>
        <fullName evidence="9">Putrescine N-methyltransferase 4</fullName>
        <shortName evidence="9">NtPMT4</shortName>
        <ecNumber evidence="2">2.1.1.53</ecNumber>
    </recommendedName>
</protein>
<name>PMT4_TOBAC</name>
<organism>
    <name type="scientific">Nicotiana tabacum</name>
    <name type="common">Common tobacco</name>
    <dbReference type="NCBI Taxonomy" id="4097"/>
    <lineage>
        <taxon>Eukaryota</taxon>
        <taxon>Viridiplantae</taxon>
        <taxon>Streptophyta</taxon>
        <taxon>Embryophyta</taxon>
        <taxon>Tracheophyta</taxon>
        <taxon>Spermatophyta</taxon>
        <taxon>Magnoliopsida</taxon>
        <taxon>eudicotyledons</taxon>
        <taxon>Gunneridae</taxon>
        <taxon>Pentapetalae</taxon>
        <taxon>asterids</taxon>
        <taxon>lamiids</taxon>
        <taxon>Solanales</taxon>
        <taxon>Solanaceae</taxon>
        <taxon>Nicotianoideae</taxon>
        <taxon>Nicotianeae</taxon>
        <taxon>Nicotiana</taxon>
    </lineage>
</organism>
<comment type="function">
    <text evidence="6 7 9">Involved in the biosynthesis of pyridine alkaloid natural products, leading mainly to the production of anabasine, anatabine, nicotine and nornicotine, effective deterrents against herbivores with antiparasitic and pesticide properties (neurotoxins); nornicotine serves as the precursor in the synthesis of the carcinogen compound N'-nitrosonornicotine (NNN) (PubMed:10598105, PubMed:31276744, PubMed:34095742). Methyltransferase that mediates the conversion of putrescine to N-methylputrescine (PubMed:10598105). Promotes leaves ripening (PubMed:34095742).</text>
</comment>
<comment type="catalytic activity">
    <reaction evidence="2">
        <text>putrescine + S-adenosyl-L-methionine = N-methylputrescine + S-adenosyl-L-homocysteine + H(+)</text>
        <dbReference type="Rhea" id="RHEA:15037"/>
        <dbReference type="ChEBI" id="CHEBI:15378"/>
        <dbReference type="ChEBI" id="CHEBI:57856"/>
        <dbReference type="ChEBI" id="CHEBI:58039"/>
        <dbReference type="ChEBI" id="CHEBI:59789"/>
        <dbReference type="ChEBI" id="CHEBI:326268"/>
        <dbReference type="EC" id="2.1.1.53"/>
    </reaction>
</comment>
<comment type="pathway">
    <text evidence="10">Alkaloid biosynthesis; nicotine biosynthesis.</text>
</comment>
<comment type="tissue specificity">
    <text evidence="4">Predominantly expressed in roots.</text>
</comment>
<comment type="induction">
    <text evidence="4 5 8">Accumulates upon the removal of flower heads and young leaves (PubMed:10598105). Triggered by jasmonic acid (MeJA) (PubMed:15604714, PubMed:9869416).</text>
</comment>
<comment type="disruption phenotype">
    <text evidence="7">Plants suppressed for PMT1, PMT2, PMT3 and PMT4 exhibit strongly reduced nicotine levels but accumulate polyamines in roots, and have an impaired leaf maturation phenotype at harvest.</text>
</comment>
<comment type="similarity">
    <text evidence="2">Belongs to the class I-like SAM-binding methyltransferase superfamily. Putrescine methyltransferase family.</text>
</comment>
<accession>Q9SEH4</accession>
<accession>A0A1S3XYW1</accession>
<gene>
    <name evidence="9" type="primary">PMT4</name>
    <name evidence="11" type="ORF">LOC107770255</name>
</gene>
<proteinExistence type="evidence at transcript level"/>
<keyword id="KW-0017">Alkaloid metabolism</keyword>
<keyword id="KW-0489">Methyltransferase</keyword>
<keyword id="KW-0620">Polyamine biosynthesis</keyword>
<keyword id="KW-0661">Putrescine biosynthesis</keyword>
<keyword id="KW-1185">Reference proteome</keyword>
<keyword id="KW-0949">S-adenosyl-L-methionine</keyword>
<keyword id="KW-0808">Transferase</keyword>
<evidence type="ECO:0000255" key="1">
    <source>
        <dbReference type="PROSITE-ProRule" id="PRU00354"/>
    </source>
</evidence>
<evidence type="ECO:0000255" key="2">
    <source>
        <dbReference type="PROSITE-ProRule" id="PRU00947"/>
    </source>
</evidence>
<evidence type="ECO:0000256" key="3">
    <source>
        <dbReference type="SAM" id="MobiDB-lite"/>
    </source>
</evidence>
<evidence type="ECO:0000269" key="4">
    <source>
    </source>
</evidence>
<evidence type="ECO:0000269" key="5">
    <source>
    </source>
</evidence>
<evidence type="ECO:0000269" key="6">
    <source>
    </source>
</evidence>
<evidence type="ECO:0000269" key="7">
    <source>
    </source>
</evidence>
<evidence type="ECO:0000269" key="8">
    <source>
    </source>
</evidence>
<evidence type="ECO:0000303" key="9">
    <source>
    </source>
</evidence>
<evidence type="ECO:0000305" key="10"/>
<evidence type="ECO:0000312" key="11">
    <source>
        <dbReference type="RefSeq" id="XP_016445029.1"/>
    </source>
</evidence>
<dbReference type="EC" id="2.1.1.53" evidence="2"/>
<dbReference type="EMBL" id="AF126812">
    <property type="protein sequence ID" value="AAF14881.1"/>
    <property type="molecule type" value="Genomic_DNA"/>
</dbReference>
<dbReference type="RefSeq" id="XP_016445029.1">
    <property type="nucleotide sequence ID" value="XM_016589543.1"/>
</dbReference>
<dbReference type="SMR" id="Q9SEH4"/>
<dbReference type="STRING" id="4097.A0A1S3XYW1"/>
<dbReference type="PaxDb" id="4097-Q9SEH4"/>
<dbReference type="KEGG" id="nta:107770255"/>
<dbReference type="OMA" id="MNGHQSG"/>
<dbReference type="OrthoDB" id="38125at2759"/>
<dbReference type="BRENDA" id="2.1.1.53">
    <property type="organism ID" value="3645"/>
</dbReference>
<dbReference type="UniPathway" id="UPA00107"/>
<dbReference type="Proteomes" id="UP000084051">
    <property type="component" value="Unplaced"/>
</dbReference>
<dbReference type="GO" id="GO:0005829">
    <property type="term" value="C:cytosol"/>
    <property type="evidence" value="ECO:0000318"/>
    <property type="project" value="GO_Central"/>
</dbReference>
<dbReference type="GO" id="GO:0030750">
    <property type="term" value="F:putrescine N-methyltransferase activity"/>
    <property type="evidence" value="ECO:0007669"/>
    <property type="project" value="UniProtKB-EC"/>
</dbReference>
<dbReference type="GO" id="GO:0004766">
    <property type="term" value="F:spermidine synthase activity"/>
    <property type="evidence" value="ECO:0000318"/>
    <property type="project" value="GO_Central"/>
</dbReference>
<dbReference type="GO" id="GO:0009820">
    <property type="term" value="P:alkaloid metabolic process"/>
    <property type="evidence" value="ECO:0007669"/>
    <property type="project" value="UniProtKB-KW"/>
</dbReference>
<dbReference type="GO" id="GO:0032259">
    <property type="term" value="P:methylation"/>
    <property type="evidence" value="ECO:0007669"/>
    <property type="project" value="UniProtKB-KW"/>
</dbReference>
<dbReference type="GO" id="GO:0042179">
    <property type="term" value="P:nicotine biosynthetic process"/>
    <property type="evidence" value="ECO:0007669"/>
    <property type="project" value="UniProtKB-UniPathway"/>
</dbReference>
<dbReference type="GO" id="GO:0009446">
    <property type="term" value="P:putrescine biosynthetic process"/>
    <property type="evidence" value="ECO:0007669"/>
    <property type="project" value="UniProtKB-KW"/>
</dbReference>
<dbReference type="GO" id="GO:0009753">
    <property type="term" value="P:response to jasmonic acid"/>
    <property type="evidence" value="ECO:0000270"/>
    <property type="project" value="UniProtKB"/>
</dbReference>
<dbReference type="GO" id="GO:0008295">
    <property type="term" value="P:spermidine biosynthetic process"/>
    <property type="evidence" value="ECO:0000318"/>
    <property type="project" value="GO_Central"/>
</dbReference>
<dbReference type="CDD" id="cd02440">
    <property type="entry name" value="AdoMet_MTases"/>
    <property type="match status" value="1"/>
</dbReference>
<dbReference type="FunFam" id="2.30.140.10:FF:000001">
    <property type="entry name" value="SPE3p Spermidine synthase"/>
    <property type="match status" value="1"/>
</dbReference>
<dbReference type="FunFam" id="3.40.50.150:FF:000013">
    <property type="entry name" value="Spermidine synthase"/>
    <property type="match status" value="1"/>
</dbReference>
<dbReference type="Gene3D" id="2.30.140.10">
    <property type="entry name" value="Spermidine synthase, tetramerisation domain"/>
    <property type="match status" value="1"/>
</dbReference>
<dbReference type="Gene3D" id="3.40.50.150">
    <property type="entry name" value="Vaccinia Virus protein VP39"/>
    <property type="match status" value="1"/>
</dbReference>
<dbReference type="HAMAP" id="MF_00198">
    <property type="entry name" value="Spermidine_synth"/>
    <property type="match status" value="1"/>
</dbReference>
<dbReference type="InterPro" id="IPR030374">
    <property type="entry name" value="PABS"/>
</dbReference>
<dbReference type="InterPro" id="IPR030373">
    <property type="entry name" value="PABS_CS"/>
</dbReference>
<dbReference type="InterPro" id="IPR025803">
    <property type="entry name" value="Putrescine_N-MeTfrase"/>
</dbReference>
<dbReference type="InterPro" id="IPR029063">
    <property type="entry name" value="SAM-dependent_MTases_sf"/>
</dbReference>
<dbReference type="InterPro" id="IPR001045">
    <property type="entry name" value="Spermi_synthase"/>
</dbReference>
<dbReference type="InterPro" id="IPR035246">
    <property type="entry name" value="Spermidine_synt_N"/>
</dbReference>
<dbReference type="InterPro" id="IPR037163">
    <property type="entry name" value="Spermidine_synt_N_sf"/>
</dbReference>
<dbReference type="NCBIfam" id="NF002010">
    <property type="entry name" value="PRK00811.1"/>
    <property type="match status" value="1"/>
</dbReference>
<dbReference type="NCBIfam" id="TIGR00417">
    <property type="entry name" value="speE"/>
    <property type="match status" value="1"/>
</dbReference>
<dbReference type="PANTHER" id="PTHR11558:SF53">
    <property type="entry name" value="PUTRESCINE N-METHYLTRANSFERASE 1"/>
    <property type="match status" value="1"/>
</dbReference>
<dbReference type="PANTHER" id="PTHR11558">
    <property type="entry name" value="SPERMIDINE/SPERMINE SYNTHASE"/>
    <property type="match status" value="1"/>
</dbReference>
<dbReference type="Pfam" id="PF17284">
    <property type="entry name" value="Spermine_synt_N"/>
    <property type="match status" value="1"/>
</dbReference>
<dbReference type="Pfam" id="PF01564">
    <property type="entry name" value="Spermine_synth"/>
    <property type="match status" value="1"/>
</dbReference>
<dbReference type="SUPFAM" id="SSF53335">
    <property type="entry name" value="S-adenosyl-L-methionine-dependent methyltransferases"/>
    <property type="match status" value="1"/>
</dbReference>
<dbReference type="PROSITE" id="PS01330">
    <property type="entry name" value="PABS_1"/>
    <property type="match status" value="1"/>
</dbReference>
<dbReference type="PROSITE" id="PS51006">
    <property type="entry name" value="PABS_2"/>
    <property type="match status" value="1"/>
</dbReference>
<dbReference type="PROSITE" id="PS51615">
    <property type="entry name" value="SAM_MT_PUTRESCINE"/>
    <property type="match status" value="1"/>
</dbReference>